<organism>
    <name type="scientific">Hepatitis B virus genotype A2 subtype adw2 (strain Rutter 1979)</name>
    <name type="common">HBV-A</name>
    <dbReference type="NCBI Taxonomy" id="480116"/>
    <lineage>
        <taxon>Viruses</taxon>
        <taxon>Riboviria</taxon>
        <taxon>Pararnavirae</taxon>
        <taxon>Artverviricota</taxon>
        <taxon>Revtraviricetes</taxon>
        <taxon>Blubervirales</taxon>
        <taxon>Hepadnaviridae</taxon>
        <taxon>Orthohepadnavirus</taxon>
        <taxon>Hepatitis B virus</taxon>
    </lineage>
</organism>
<protein>
    <recommendedName>
        <fullName evidence="1">Capsid protein</fullName>
    </recommendedName>
    <alternativeName>
        <fullName evidence="1">Core antigen</fullName>
    </alternativeName>
    <alternativeName>
        <fullName evidence="1">Core protein</fullName>
    </alternativeName>
    <alternativeName>
        <fullName evidence="1">HBcAg</fullName>
    </alternativeName>
    <alternativeName>
        <fullName evidence="1">p21.5</fullName>
    </alternativeName>
</protein>
<keyword id="KW-0024">Alternative initiation</keyword>
<keyword id="KW-0167">Capsid protein</keyword>
<keyword id="KW-1176">Cytoplasmic inwards viral transport</keyword>
<keyword id="KW-0238">DNA-binding</keyword>
<keyword id="KW-1035">Host cytoplasm</keyword>
<keyword id="KW-0945">Host-virus interaction</keyword>
<keyword id="KW-1177">Microtubular inwards viral transport</keyword>
<keyword id="KW-0597">Phosphoprotein</keyword>
<keyword id="KW-0677">Repeat</keyword>
<keyword id="KW-0694">RNA-binding</keyword>
<keyword id="KW-1144">T=4 icosahedral capsid protein</keyword>
<keyword id="KW-1163">Viral penetration into host nucleus</keyword>
<keyword id="KW-0946">Virion</keyword>
<keyword id="KW-1160">Virus entry into host cell</keyword>
<sequence>MDIDPYKEFGATVELLSFLPSDFFPSVRDLLDTASALYREALESPEHCSPHHTALRQAILCWGELMTLATWVGNNLEDPASRDLVVNYVNTNVGLKIRQLLWFHISCLTFGRETVLEYLVSFGVWIRTPPAYRPPNAPILSTLPETTVVRRRDRGRSPRRRTPSPRRRRSPSPRRRRSQSRESQC</sequence>
<feature type="chain" id="PRO_0000222308" description="Capsid protein">
    <location>
        <begin position="1"/>
        <end position="185"/>
    </location>
</feature>
<feature type="repeat" description="1; half-length">
    <location>
        <begin position="157"/>
        <end position="163"/>
    </location>
</feature>
<feature type="repeat" description="2">
    <location>
        <begin position="164"/>
        <end position="171"/>
    </location>
</feature>
<feature type="repeat" description="3">
    <location>
        <begin position="172"/>
        <end position="179"/>
    </location>
</feature>
<feature type="region of interest" description="Disordered" evidence="2">
    <location>
        <begin position="136"/>
        <end position="185"/>
    </location>
</feature>
<feature type="region of interest" description="3 X 8 AA repeats of S-P-R-R-R-[PR]-S-Q">
    <location>
        <begin position="157"/>
        <end position="179"/>
    </location>
</feature>
<feature type="region of interest" description="RNA binding" evidence="1">
    <location>
        <begin position="179"/>
        <end position="185"/>
    </location>
</feature>
<feature type="short sequence motif" description="Bipartite nuclear localization signal" evidence="1">
    <location>
        <begin position="160"/>
        <end position="177"/>
    </location>
</feature>
<feature type="compositionally biased region" description="Basic residues" evidence="2">
    <location>
        <begin position="149"/>
        <end position="178"/>
    </location>
</feature>
<feature type="modified residue" description="Phosphoserine; by host" evidence="1 8">
    <location>
        <position position="157"/>
    </location>
</feature>
<feature type="modified residue" description="Phosphoserine; by host" evidence="1 8">
    <location>
        <position position="164"/>
    </location>
</feature>
<feature type="modified residue" description="Phosphoserine; by host" evidence="1 8">
    <location>
        <position position="172"/>
    </location>
</feature>
<feature type="sequence variant">
    <original>V</original>
    <variation>M</variation>
    <location>
        <position position="93"/>
    </location>
</feature>
<feature type="sequence variant" description="Frequent mutation in chronic HBV carriers." evidence="3">
    <original>I</original>
    <variation>L</variation>
    <location>
        <position position="97"/>
    </location>
</feature>
<feature type="sequence variant">
    <original>R</original>
    <variation>P</variation>
    <location>
        <position position="169"/>
    </location>
</feature>
<feature type="mutagenesis site" description="No effect on dimer or capsid formation." evidence="5">
    <original>C</original>
    <variation>A</variation>
    <location>
        <position position="48"/>
    </location>
</feature>
<feature type="mutagenesis site" description="No effect on dimer or capsid formation." evidence="5">
    <original>C</original>
    <variation>A</variation>
    <location>
        <position position="61"/>
    </location>
</feature>
<feature type="mutagenesis site" description="No effect on dimer or capsid formation." evidence="5">
    <original>C</original>
    <variation>A</variation>
    <location>
        <position position="107"/>
    </location>
</feature>
<feature type="mutagenesis site" description="Increases nuclear localization." evidence="8">
    <original>S</original>
    <variation>A</variation>
    <location>
        <position position="157"/>
    </location>
</feature>
<feature type="mutagenesis site" description="Increases nuclear localization." evidence="8">
    <original>S</original>
    <variation>A</variation>
    <location>
        <position position="164"/>
    </location>
</feature>
<feature type="mutagenesis site" description="Increases nuclear localization." evidence="8">
    <original>S</original>
    <variation>A</variation>
    <location>
        <position position="172"/>
    </location>
</feature>
<feature type="mutagenesis site" description="No effect on dimer or capsid formation." evidence="5">
    <original>C</original>
    <variation>A</variation>
    <location>
        <position position="185"/>
    </location>
</feature>
<evidence type="ECO:0000255" key="1">
    <source>
        <dbReference type="HAMAP-Rule" id="MF_04076"/>
    </source>
</evidence>
<evidence type="ECO:0000256" key="2">
    <source>
        <dbReference type="SAM" id="MobiDB-lite"/>
    </source>
</evidence>
<evidence type="ECO:0000269" key="3">
    <source>
    </source>
</evidence>
<evidence type="ECO:0000269" key="4">
    <source>
    </source>
</evidence>
<evidence type="ECO:0000269" key="5">
    <source>
    </source>
</evidence>
<evidence type="ECO:0000269" key="6">
    <source>
    </source>
</evidence>
<evidence type="ECO:0000269" key="7">
    <source>
    </source>
</evidence>
<evidence type="ECO:0000269" key="8">
    <source>
    </source>
</evidence>
<evidence type="ECO:0000269" key="9">
    <source>
    </source>
</evidence>
<reference key="1">
    <citation type="book" date="1980" name="Animal virus genetics">
        <title>The nucleotide sequence of the hepatitis B viral genome and the identification of the major viral genes.</title>
        <editorList>
            <person name="Field B.N."/>
            <person name="Jaenisch R."/>
            <person name="Fox C.F."/>
        </editorList>
        <authorList>
            <person name="Valenzuela P."/>
            <person name="Quiroga M."/>
            <person name="Zaldivar J."/>
            <person name="Gray P."/>
            <person name="Rutter W.J."/>
        </authorList>
    </citation>
    <scope>NUCLEOTIDE SEQUENCE [GENOMIC DNA]</scope>
</reference>
<reference key="2">
    <citation type="journal article" date="1986" name="Proc. Natl. Acad. Sci. U.S.A.">
        <title>Hepatitis B virus gene function: the precore region targets the core antigen to cellular membranes and causes the secretion of the e antigen.</title>
        <authorList>
            <person name="Ou J.H."/>
            <person name="Laub O."/>
            <person name="Rutter W.J."/>
        </authorList>
    </citation>
    <scope>SUBCELLULAR LOCATION</scope>
</reference>
<reference key="3">
    <citation type="journal article" date="1992" name="J. Virol.">
        <title>RNA- and DNA-binding activities in hepatitis B virus capsid protein: a model for their roles in viral replication.</title>
        <authorList>
            <person name="Hatton T."/>
            <person name="Zhou S."/>
            <person name="Standring D.N."/>
        </authorList>
    </citation>
    <scope>RNA AND DNA-BINDING</scope>
</reference>
<reference key="4">
    <citation type="journal article" date="1992" name="J. Virol.">
        <title>Cys residues of the hepatitis B virus capsid protein are not essential for the assembly of viral core particles but can influence their stability.</title>
        <authorList>
            <person name="Zhou S."/>
            <person name="Standring D.N."/>
        </authorList>
    </citation>
    <scope>MUTAGENESIS OF CYS-48; CYS-61; CYS-107 AND CYS-185</scope>
</reference>
<reference key="5">
    <citation type="journal article" date="1992" name="Proc. Natl. Acad. Sci. U.S.A.">
        <title>Hepatitis B virus capsid particles are assembled from core-protein dimer precursors.</title>
        <authorList>
            <person name="Zhou S."/>
            <person name="Standring D.N."/>
        </authorList>
    </citation>
    <scope>DIMERIZATION</scope>
</reference>
<reference key="6">
    <citation type="journal article" date="1994" name="J. Virol.">
        <title>A protease-sensitive hinge linking the two domains of the hepatitis B virus core protein is exposed on the viral capsid surface.</title>
        <authorList>
            <person name="Seifer M."/>
            <person name="Standring D.N."/>
        </authorList>
    </citation>
    <scope>FUNCTION</scope>
</reference>
<reference key="7">
    <citation type="journal article" date="1995" name="J. Virol.">
        <title>Phosphorylation and nuclear localization of the hepatitis B virus core protein: significance of serine in the three repeated SPRRR motifs.</title>
        <authorList>
            <person name="Liao W."/>
            <person name="Ou J.H."/>
        </authorList>
    </citation>
    <scope>PHOSPHORYLATION AT SER-157; SER-164 AND SER-172</scope>
    <scope>MUTAGENESIS OF SER-157; SER-164 AND SER-172</scope>
</reference>
<reference key="8">
    <citation type="journal article" date="1998" name="J. Gen. Virol.">
        <title>Phosphorylation of the hepatitis B virus core protein by glyceraldehyde-3-phosphate dehydrogenase protein kinase activity.</title>
        <authorList>
            <person name="Duclos-Vallee J.C."/>
            <person name="Capel F."/>
            <person name="Mabit H."/>
            <person name="Petit M.A."/>
        </authorList>
    </citation>
    <scope>PHOSPHORYLATION BY HUMAN GAPDH</scope>
</reference>
<reference key="9">
    <citation type="journal article" date="1999" name="J. Virol.">
        <title>Subtype-independent immature secretion and subtype-dependent replication deficiency of a highly frequent, naturally occurring mutation of human hepatitis B virus core antigen.</title>
        <authorList>
            <person name="Yuan T.T."/>
            <person name="Tai P.C."/>
            <person name="Shih C."/>
        </authorList>
    </citation>
    <scope>VARIANT LEU-97</scope>
</reference>
<reference key="10">
    <citation type="journal article" date="2000" name="J. Biomed. Sci.">
        <title>Hepatitis B virus core protein interacts with the C-terminal region of actin-binding protein.</title>
        <authorList>
            <person name="Huang C.J."/>
            <person name="Chen Y.H."/>
            <person name="Ting L.P."/>
        </authorList>
    </citation>
    <scope>INTERACTION WITH HUMAN FLNB</scope>
</reference>
<reference key="11">
    <citation type="journal article" date="2004" name="Virus Res.">
        <title>Envelopment of the hepatitis B virus nucleocapsid.</title>
        <authorList>
            <person name="Bruss V."/>
        </authorList>
    </citation>
    <scope>REVIEW</scope>
</reference>
<reference key="12">
    <citation type="journal article" date="2019" name="Sci. Rep.">
        <title>Direct interaction between the hepatitis B virus core and envelope proteins analyzed in a cellular context.</title>
        <authorList>
            <person name="Pastor F."/>
            <person name="Herrscher C."/>
            <person name="Patient R."/>
            <person name="Eymieux S."/>
            <person name="Moreau A."/>
            <person name="Burlaud-Gaillard J."/>
            <person name="Seigneuret F."/>
            <person name="de Rocquigny H."/>
            <person name="Roingeard P."/>
            <person name="Hourioux C."/>
        </authorList>
    </citation>
    <scope>INTERACTION WITH THE LARGE ENVELOPE PROTEIN</scope>
</reference>
<accession>P03148</accession>
<accession>Q67868</accession>
<gene>
    <name evidence="1" type="primary">C</name>
</gene>
<name>CAPSD_HBVA3</name>
<organismHost>
    <name type="scientific">Homo sapiens</name>
    <name type="common">Human</name>
    <dbReference type="NCBI Taxonomy" id="9606"/>
</organismHost>
<organismHost>
    <name type="scientific">Pan troglodytes</name>
    <name type="common">Chimpanzee</name>
    <dbReference type="NCBI Taxonomy" id="9598"/>
</organismHost>
<dbReference type="EMBL" id="X02763">
    <property type="protein sequence ID" value="CAA26537.1"/>
    <property type="molecule type" value="Genomic_DNA"/>
</dbReference>
<dbReference type="SMR" id="P03148"/>
<dbReference type="iPTMnet" id="P03148"/>
<dbReference type="Proteomes" id="UP000008766">
    <property type="component" value="Segment"/>
</dbReference>
<dbReference type="GO" id="GO:0043657">
    <property type="term" value="C:host cell"/>
    <property type="evidence" value="ECO:0007669"/>
    <property type="project" value="GOC"/>
</dbReference>
<dbReference type="GO" id="GO:0030430">
    <property type="term" value="C:host cell cytoplasm"/>
    <property type="evidence" value="ECO:0007669"/>
    <property type="project" value="UniProtKB-SubCell"/>
</dbReference>
<dbReference type="GO" id="GO:0039619">
    <property type="term" value="C:T=4 icosahedral viral capsid"/>
    <property type="evidence" value="ECO:0007669"/>
    <property type="project" value="UniProtKB-UniRule"/>
</dbReference>
<dbReference type="GO" id="GO:0003677">
    <property type="term" value="F:DNA binding"/>
    <property type="evidence" value="ECO:0007669"/>
    <property type="project" value="UniProtKB-UniRule"/>
</dbReference>
<dbReference type="GO" id="GO:0003723">
    <property type="term" value="F:RNA binding"/>
    <property type="evidence" value="ECO:0007669"/>
    <property type="project" value="UniProtKB-UniRule"/>
</dbReference>
<dbReference type="GO" id="GO:0005198">
    <property type="term" value="F:structural molecule activity"/>
    <property type="evidence" value="ECO:0007669"/>
    <property type="project" value="UniProtKB-UniRule"/>
</dbReference>
<dbReference type="GO" id="GO:0075521">
    <property type="term" value="P:microtubule-dependent intracellular transport of viral material towards nucleus"/>
    <property type="evidence" value="ECO:0007669"/>
    <property type="project" value="UniProtKB-UniRule"/>
</dbReference>
<dbReference type="GO" id="GO:0046718">
    <property type="term" value="P:symbiont entry into host cell"/>
    <property type="evidence" value="ECO:0007669"/>
    <property type="project" value="UniProtKB-UniRule"/>
</dbReference>
<dbReference type="GO" id="GO:0075732">
    <property type="term" value="P:viral penetration into host nucleus"/>
    <property type="evidence" value="ECO:0007669"/>
    <property type="project" value="UniProtKB-UniRule"/>
</dbReference>
<dbReference type="FunFam" id="1.10.4090.10:FF:000001">
    <property type="entry name" value="Capsid protein"/>
    <property type="match status" value="1"/>
</dbReference>
<dbReference type="Gene3D" id="1.10.4090.10">
    <property type="entry name" value="Viral capsid, core domain supefamily, Hepatitis B virus"/>
    <property type="match status" value="1"/>
</dbReference>
<dbReference type="HAMAP" id="MF_04076">
    <property type="entry name" value="HBV_HBEAG"/>
    <property type="match status" value="1"/>
</dbReference>
<dbReference type="InterPro" id="IPR002006">
    <property type="entry name" value="Hepatitis_core"/>
</dbReference>
<dbReference type="InterPro" id="IPR036459">
    <property type="entry name" value="Viral_capsid_core_dom_sf_HBV"/>
</dbReference>
<dbReference type="Pfam" id="PF00906">
    <property type="entry name" value="Hepatitis_core"/>
    <property type="match status" value="2"/>
</dbReference>
<dbReference type="SUPFAM" id="SSF47852">
    <property type="entry name" value="Hepatitis B viral capsid (hbcag)"/>
    <property type="match status" value="1"/>
</dbReference>
<comment type="function">
    <text evidence="1">Self assembles to form an icosahedral capsid. Most capsids appear to be large particles with an icosahedral symmetry of T=4 and consist of 240 copies of capsid protein, though a fraction forms smaller T=3 particles consisting of 180 capsid proteins. Entering capsids are transported along microtubules to the nucleus. Phosphorylation of the capsid is thought to induce exposure of nuclear localization signal in the C-terminal portion of the capsid protein that allows binding to the nuclear pore complex via the importin (karyopherin-) alpha and beta. Capsids are imported in intact form through the nuclear pore into the nuclear basket, where it probably binds NUP153. Only capsids that contain the mature viral genome can release the viral DNA and capsid protein into the nucleoplasm. Immature capsids get stuck in the basket. Capsids encapsulate the pre-genomic RNA and the P protein. Pre-genomic RNA is reverse-transcribed into DNA while the capsid is still in the cytoplasm. The capsid can then either be directed to the nucleus, providing more genomes for transcription, or bud through the endoplasmic reticulum to provide new virions.</text>
</comment>
<comment type="subunit">
    <text evidence="1 4 7">Homodimerizes, then multimerizes. Interacts with cytosol exposed regions of viral L glycoprotein present in the reticulum-to-Golgi compartment (PubMed:31700077). Interacts with human FLNB (PubMed:10754391). Phosphorylated form interacts with host importin alpha; this interaction depends on the exposure of the NLS, which itself depends upon genome maturation and/or phosphorylation of the capsid protein. Interacts with host NUP153.</text>
</comment>
<comment type="subcellular location">
    <subcellularLocation>
        <location evidence="1 6">Virion</location>
    </subcellularLocation>
    <subcellularLocation>
        <location evidence="1 6">Host cytoplasm</location>
    </subcellularLocation>
</comment>
<comment type="alternative products">
    <event type="alternative initiation"/>
    <isoform>
        <id>P03148-1</id>
        <name>Capsid protein</name>
        <sequence type="displayed"/>
    </isoform>
    <isoform>
        <id>P0C625-1</id>
        <name>External core antigen</name>
        <sequence type="external"/>
    </isoform>
</comment>
<comment type="PTM">
    <text evidence="1 8 9">Phosphorylated by host SRPK1, SRPK2, and maybe protein kinase C or GAPDH. Phosphorylation is critical for pregenomic RNA packaging. Protein kinase C phosphorylation is stimulated by HBx protein and may play a role in transport of the viral genome to the nucleus at the late step during the viral replication cycle.</text>
</comment>
<comment type="similarity">
    <text evidence="1">Belongs to the orthohepadnavirus core antigen family.</text>
</comment>
<proteinExistence type="evidence at protein level"/>